<comment type="function">
    <text evidence="1">Probably deamidates glutamine residues to glutamate on methyl-accepting chemotaxis receptors (MCPs), playing an important role in chemotaxis.</text>
</comment>
<comment type="catalytic activity">
    <reaction evidence="1">
        <text>L-glutaminyl-[protein] + H2O = L-glutamyl-[protein] + NH4(+)</text>
        <dbReference type="Rhea" id="RHEA:16441"/>
        <dbReference type="Rhea" id="RHEA-COMP:10207"/>
        <dbReference type="Rhea" id="RHEA-COMP:10208"/>
        <dbReference type="ChEBI" id="CHEBI:15377"/>
        <dbReference type="ChEBI" id="CHEBI:28938"/>
        <dbReference type="ChEBI" id="CHEBI:29973"/>
        <dbReference type="ChEBI" id="CHEBI:30011"/>
        <dbReference type="EC" id="3.5.1.44"/>
    </reaction>
</comment>
<comment type="similarity">
    <text evidence="1">Belongs to the CheD family.</text>
</comment>
<evidence type="ECO:0000255" key="1">
    <source>
        <dbReference type="HAMAP-Rule" id="MF_01440"/>
    </source>
</evidence>
<feature type="chain" id="PRO_1000145896" description="Probable chemoreceptor glutamine deamidase CheD">
    <location>
        <begin position="1"/>
        <end position="198"/>
    </location>
</feature>
<sequence>MNASLRTDDVMRYQDARFQTLAAKLLPTQYLVVDDTTALTTTLGSCVAACLRDPVLKIGGMNHFLLPEGNAGDGAPARYGSYAMELLINDMLKRGAHRKRIEAKVFGGANVLKGFTSNPVGTRNAEFVRQYLQAEHIPIIAEDLCGIHPRKIWFFADTGRVVVQRLPHAHEAEVAATESAVRARLSKAPVTGGVELFE</sequence>
<proteinExistence type="inferred from homology"/>
<keyword id="KW-0145">Chemotaxis</keyword>
<keyword id="KW-0378">Hydrolase</keyword>
<keyword id="KW-1185">Reference proteome</keyword>
<name>CHED_STRMK</name>
<organism>
    <name type="scientific">Stenotrophomonas maltophilia (strain K279a)</name>
    <dbReference type="NCBI Taxonomy" id="522373"/>
    <lineage>
        <taxon>Bacteria</taxon>
        <taxon>Pseudomonadati</taxon>
        <taxon>Pseudomonadota</taxon>
        <taxon>Gammaproteobacteria</taxon>
        <taxon>Lysobacterales</taxon>
        <taxon>Lysobacteraceae</taxon>
        <taxon>Stenotrophomonas</taxon>
        <taxon>Stenotrophomonas maltophilia group</taxon>
    </lineage>
</organism>
<dbReference type="EC" id="3.5.1.44" evidence="1"/>
<dbReference type="EMBL" id="AM743169">
    <property type="protein sequence ID" value="CAQ45746.1"/>
    <property type="molecule type" value="Genomic_DNA"/>
</dbReference>
<dbReference type="RefSeq" id="WP_005409511.1">
    <property type="nucleotide sequence ID" value="NC_010943.1"/>
</dbReference>
<dbReference type="SMR" id="B2FQA1"/>
<dbReference type="EnsemblBacteria" id="CAQ45746">
    <property type="protein sequence ID" value="CAQ45746"/>
    <property type="gene ID" value="Smlt2249"/>
</dbReference>
<dbReference type="GeneID" id="93833354"/>
<dbReference type="KEGG" id="sml:Smlt2249"/>
<dbReference type="eggNOG" id="COG1871">
    <property type="taxonomic scope" value="Bacteria"/>
</dbReference>
<dbReference type="HOGENOM" id="CLU_087854_0_0_6"/>
<dbReference type="Proteomes" id="UP000008840">
    <property type="component" value="Chromosome"/>
</dbReference>
<dbReference type="GO" id="GO:0050568">
    <property type="term" value="F:protein-glutamine glutaminase activity"/>
    <property type="evidence" value="ECO:0007669"/>
    <property type="project" value="UniProtKB-UniRule"/>
</dbReference>
<dbReference type="GO" id="GO:0006935">
    <property type="term" value="P:chemotaxis"/>
    <property type="evidence" value="ECO:0007669"/>
    <property type="project" value="UniProtKB-UniRule"/>
</dbReference>
<dbReference type="CDD" id="cd16352">
    <property type="entry name" value="CheD"/>
    <property type="match status" value="1"/>
</dbReference>
<dbReference type="Gene3D" id="3.30.1330.200">
    <property type="match status" value="1"/>
</dbReference>
<dbReference type="HAMAP" id="MF_01440">
    <property type="entry name" value="CheD"/>
    <property type="match status" value="1"/>
</dbReference>
<dbReference type="InterPro" id="IPR038592">
    <property type="entry name" value="CheD-like_sf"/>
</dbReference>
<dbReference type="InterPro" id="IPR005659">
    <property type="entry name" value="Chemorcpt_Glu_NH3ase_CheD"/>
</dbReference>
<dbReference type="InterPro" id="IPR011324">
    <property type="entry name" value="Cytotoxic_necrot_fac-like_cat"/>
</dbReference>
<dbReference type="NCBIfam" id="NF010013">
    <property type="entry name" value="PRK13487.1"/>
    <property type="match status" value="1"/>
</dbReference>
<dbReference type="PANTHER" id="PTHR35147">
    <property type="entry name" value="CHEMORECEPTOR GLUTAMINE DEAMIDASE CHED-RELATED"/>
    <property type="match status" value="1"/>
</dbReference>
<dbReference type="PANTHER" id="PTHR35147:SF2">
    <property type="entry name" value="CHEMORECEPTOR GLUTAMINE DEAMIDASE CHED-RELATED"/>
    <property type="match status" value="1"/>
</dbReference>
<dbReference type="Pfam" id="PF03975">
    <property type="entry name" value="CheD"/>
    <property type="match status" value="1"/>
</dbReference>
<dbReference type="SUPFAM" id="SSF64438">
    <property type="entry name" value="CNF1/YfiH-like putative cysteine hydrolases"/>
    <property type="match status" value="1"/>
</dbReference>
<accession>B2FQA1</accession>
<protein>
    <recommendedName>
        <fullName evidence="1">Probable chemoreceptor glutamine deamidase CheD</fullName>
        <ecNumber evidence="1">3.5.1.44</ecNumber>
    </recommendedName>
</protein>
<gene>
    <name evidence="1" type="primary">cheD</name>
    <name type="ordered locus">Smlt2249</name>
</gene>
<reference key="1">
    <citation type="journal article" date="2008" name="Genome Biol.">
        <title>The complete genome, comparative and functional analysis of Stenotrophomonas maltophilia reveals an organism heavily shielded by drug resistance determinants.</title>
        <authorList>
            <person name="Crossman L.C."/>
            <person name="Gould V.C."/>
            <person name="Dow J.M."/>
            <person name="Vernikos G.S."/>
            <person name="Okazaki A."/>
            <person name="Sebaihia M."/>
            <person name="Saunders D."/>
            <person name="Arrowsmith C."/>
            <person name="Carver T."/>
            <person name="Peters N."/>
            <person name="Adlem E."/>
            <person name="Kerhornou A."/>
            <person name="Lord A."/>
            <person name="Murphy L."/>
            <person name="Seeger K."/>
            <person name="Squares R."/>
            <person name="Rutter S."/>
            <person name="Quail M.A."/>
            <person name="Rajandream M.A."/>
            <person name="Harris D."/>
            <person name="Churcher C."/>
            <person name="Bentley S.D."/>
            <person name="Parkhill J."/>
            <person name="Thomson N.R."/>
            <person name="Avison M.B."/>
        </authorList>
    </citation>
    <scope>NUCLEOTIDE SEQUENCE [LARGE SCALE GENOMIC DNA]</scope>
    <source>
        <strain>K279a</strain>
    </source>
</reference>